<reference evidence="2" key="1">
    <citation type="submission" date="2010-03" db="UniProtKB">
        <title>Purification, characterization and identification of a novel fibrinolytic enzyme (FA-I) from a newly isolated strain of Arthrobacter aurescens.</title>
        <authorList>
            <person name="Huang H.-H."/>
            <person name="Chen P."/>
            <person name="Wang G.-X."/>
        </authorList>
    </citation>
    <scope>PROTEIN SEQUENCE</scope>
</reference>
<feature type="chain" id="PRO_0000394450" description="Fibrinolytic enzyme FA-I">
    <location>
        <begin position="1"/>
        <end position="15" status="greater than"/>
    </location>
</feature>
<feature type="non-terminal residue" evidence="1">
    <location>
        <position position="15"/>
    </location>
</feature>
<proteinExistence type="evidence at protein level"/>
<name>FEFA1_PAEAU</name>
<organism>
    <name type="scientific">Paenarthrobacter aurescens</name>
    <name type="common">Arthrobacter aurescens</name>
    <dbReference type="NCBI Taxonomy" id="43663"/>
    <lineage>
        <taxon>Bacteria</taxon>
        <taxon>Bacillati</taxon>
        <taxon>Actinomycetota</taxon>
        <taxon>Actinomycetes</taxon>
        <taxon>Micrococcales</taxon>
        <taxon>Micrococcaceae</taxon>
        <taxon>Paenarthrobacter</taxon>
    </lineage>
</organism>
<accession>P86499</accession>
<protein>
    <recommendedName>
        <fullName evidence="1">Fibrinolytic enzyme FA-I</fullName>
    </recommendedName>
    <alternativeName>
        <fullName>Fibrinolytic enzyme FA-1</fullName>
    </alternativeName>
</protein>
<keyword id="KW-0903">Direct protein sequencing</keyword>
<evidence type="ECO:0000303" key="1">
    <source ref="1"/>
</evidence>
<evidence type="ECO:0000305" key="2"/>
<sequence>VNQSETPVKHIGKVF</sequence>